<accession>A4WNC5</accession>
<name>PIMT_PYRAR</name>
<organism>
    <name type="scientific">Pyrobaculum arsenaticum (strain DSM 13514 / JCM 11321 / PZ6)</name>
    <dbReference type="NCBI Taxonomy" id="340102"/>
    <lineage>
        <taxon>Archaea</taxon>
        <taxon>Thermoproteota</taxon>
        <taxon>Thermoprotei</taxon>
        <taxon>Thermoproteales</taxon>
        <taxon>Thermoproteaceae</taxon>
        <taxon>Pyrobaculum</taxon>
    </lineage>
</organism>
<dbReference type="EC" id="2.1.1.77" evidence="1"/>
<dbReference type="EMBL" id="CP000660">
    <property type="protein sequence ID" value="ABP51892.1"/>
    <property type="molecule type" value="Genomic_DNA"/>
</dbReference>
<dbReference type="SMR" id="A4WNC5"/>
<dbReference type="STRING" id="340102.Pars_2349"/>
<dbReference type="KEGG" id="pas:Pars_2349"/>
<dbReference type="HOGENOM" id="CLU_055432_2_0_2"/>
<dbReference type="OrthoDB" id="33618at2157"/>
<dbReference type="PhylomeDB" id="A4WNC5"/>
<dbReference type="Proteomes" id="UP000001567">
    <property type="component" value="Chromosome"/>
</dbReference>
<dbReference type="GO" id="GO:0005737">
    <property type="term" value="C:cytoplasm"/>
    <property type="evidence" value="ECO:0007669"/>
    <property type="project" value="UniProtKB-SubCell"/>
</dbReference>
<dbReference type="GO" id="GO:0004719">
    <property type="term" value="F:protein-L-isoaspartate (D-aspartate) O-methyltransferase activity"/>
    <property type="evidence" value="ECO:0007669"/>
    <property type="project" value="UniProtKB-UniRule"/>
</dbReference>
<dbReference type="GO" id="GO:0032259">
    <property type="term" value="P:methylation"/>
    <property type="evidence" value="ECO:0007669"/>
    <property type="project" value="UniProtKB-KW"/>
</dbReference>
<dbReference type="GO" id="GO:0036211">
    <property type="term" value="P:protein modification process"/>
    <property type="evidence" value="ECO:0007669"/>
    <property type="project" value="UniProtKB-UniRule"/>
</dbReference>
<dbReference type="GO" id="GO:0030091">
    <property type="term" value="P:protein repair"/>
    <property type="evidence" value="ECO:0007669"/>
    <property type="project" value="UniProtKB-UniRule"/>
</dbReference>
<dbReference type="CDD" id="cd02440">
    <property type="entry name" value="AdoMet_MTases"/>
    <property type="match status" value="1"/>
</dbReference>
<dbReference type="FunFam" id="3.40.50.150:FF:000010">
    <property type="entry name" value="Protein-L-isoaspartate O-methyltransferase"/>
    <property type="match status" value="1"/>
</dbReference>
<dbReference type="Gene3D" id="3.40.50.150">
    <property type="entry name" value="Vaccinia Virus protein VP39"/>
    <property type="match status" value="1"/>
</dbReference>
<dbReference type="HAMAP" id="MF_00090">
    <property type="entry name" value="PIMT"/>
    <property type="match status" value="1"/>
</dbReference>
<dbReference type="InterPro" id="IPR000682">
    <property type="entry name" value="PCMT"/>
</dbReference>
<dbReference type="InterPro" id="IPR029063">
    <property type="entry name" value="SAM-dependent_MTases_sf"/>
</dbReference>
<dbReference type="NCBIfam" id="TIGR00080">
    <property type="entry name" value="pimt"/>
    <property type="match status" value="1"/>
</dbReference>
<dbReference type="NCBIfam" id="NF001453">
    <property type="entry name" value="PRK00312.1"/>
    <property type="match status" value="1"/>
</dbReference>
<dbReference type="PANTHER" id="PTHR11579">
    <property type="entry name" value="PROTEIN-L-ISOASPARTATE O-METHYLTRANSFERASE"/>
    <property type="match status" value="1"/>
</dbReference>
<dbReference type="PANTHER" id="PTHR11579:SF0">
    <property type="entry name" value="PROTEIN-L-ISOASPARTATE(D-ASPARTATE) O-METHYLTRANSFERASE"/>
    <property type="match status" value="1"/>
</dbReference>
<dbReference type="Pfam" id="PF01135">
    <property type="entry name" value="PCMT"/>
    <property type="match status" value="1"/>
</dbReference>
<dbReference type="SUPFAM" id="SSF53335">
    <property type="entry name" value="S-adenosyl-L-methionine-dependent methyltransferases"/>
    <property type="match status" value="1"/>
</dbReference>
<dbReference type="PROSITE" id="PS01279">
    <property type="entry name" value="PCMT"/>
    <property type="match status" value="1"/>
</dbReference>
<keyword id="KW-0963">Cytoplasm</keyword>
<keyword id="KW-0489">Methyltransferase</keyword>
<keyword id="KW-0949">S-adenosyl-L-methionine</keyword>
<keyword id="KW-0808">Transferase</keyword>
<sequence>MAKKLVDDLEREGVLKSERVKKALLSVPREEFVMPEYRMMAYEDRPLPLFADATISAPHMVAMMCELIEPRPGMSILEVGTGSGYHAAVCAEAIERRGKVYTVEIVKGLAIYAAQNLERLGYWGVVEVFHSDGKRGLEKFAPYDAIIVTAAAASIPSALVNQLKDGGIMVIPVEEGFGQVLYKVVRRGEKTEKKAVTYVLFVPLR</sequence>
<feature type="chain" id="PRO_1000093267" description="Protein-L-isoaspartate O-methyltransferase">
    <location>
        <begin position="1"/>
        <end position="205"/>
    </location>
</feature>
<feature type="active site" evidence="1">
    <location>
        <position position="56"/>
    </location>
</feature>
<reference key="1">
    <citation type="submission" date="2007-04" db="EMBL/GenBank/DDBJ databases">
        <title>Complete sequence of Pyrobaculum arsenaticum DSM 13514.</title>
        <authorList>
            <consortium name="US DOE Joint Genome Institute"/>
            <person name="Copeland A."/>
            <person name="Lucas S."/>
            <person name="Lapidus A."/>
            <person name="Barry K."/>
            <person name="Glavina del Rio T."/>
            <person name="Dalin E."/>
            <person name="Tice H."/>
            <person name="Pitluck S."/>
            <person name="Chain P."/>
            <person name="Malfatti S."/>
            <person name="Shin M."/>
            <person name="Vergez L."/>
            <person name="Schmutz J."/>
            <person name="Larimer F."/>
            <person name="Land M."/>
            <person name="Hauser L."/>
            <person name="Kyrpides N."/>
            <person name="Mikhailova N."/>
            <person name="Cozen A.E."/>
            <person name="Fitz-Gibbon S.T."/>
            <person name="House C.H."/>
            <person name="Saltikov C."/>
            <person name="Lowe T.M."/>
            <person name="Richardson P."/>
        </authorList>
    </citation>
    <scope>NUCLEOTIDE SEQUENCE [LARGE SCALE GENOMIC DNA]</scope>
    <source>
        <strain>ATCC 700994 / DSM 13514 / JCM 11321 / PZ6</strain>
    </source>
</reference>
<protein>
    <recommendedName>
        <fullName evidence="1">Protein-L-isoaspartate O-methyltransferase</fullName>
        <ecNumber evidence="1">2.1.1.77</ecNumber>
    </recommendedName>
    <alternativeName>
        <fullName evidence="1">L-isoaspartyl protein carboxyl methyltransferase</fullName>
    </alternativeName>
    <alternativeName>
        <fullName evidence="1">Protein L-isoaspartyl methyltransferase</fullName>
    </alternativeName>
    <alternativeName>
        <fullName evidence="1">Protein-beta-aspartate methyltransferase</fullName>
        <shortName evidence="1">PIMT</shortName>
    </alternativeName>
</protein>
<proteinExistence type="inferred from homology"/>
<evidence type="ECO:0000255" key="1">
    <source>
        <dbReference type="HAMAP-Rule" id="MF_00090"/>
    </source>
</evidence>
<comment type="function">
    <text evidence="1">Catalyzes the methyl esterification of L-isoaspartyl residues in peptides and proteins that result from spontaneous decomposition of normal L-aspartyl and L-asparaginyl residues. It plays a role in the repair and/or degradation of damaged proteins.</text>
</comment>
<comment type="catalytic activity">
    <reaction evidence="1">
        <text>[protein]-L-isoaspartate + S-adenosyl-L-methionine = [protein]-L-isoaspartate alpha-methyl ester + S-adenosyl-L-homocysteine</text>
        <dbReference type="Rhea" id="RHEA:12705"/>
        <dbReference type="Rhea" id="RHEA-COMP:12143"/>
        <dbReference type="Rhea" id="RHEA-COMP:12144"/>
        <dbReference type="ChEBI" id="CHEBI:57856"/>
        <dbReference type="ChEBI" id="CHEBI:59789"/>
        <dbReference type="ChEBI" id="CHEBI:90596"/>
        <dbReference type="ChEBI" id="CHEBI:90598"/>
        <dbReference type="EC" id="2.1.1.77"/>
    </reaction>
</comment>
<comment type="subcellular location">
    <subcellularLocation>
        <location evidence="1">Cytoplasm</location>
    </subcellularLocation>
</comment>
<comment type="similarity">
    <text evidence="1">Belongs to the methyltransferase superfamily. L-isoaspartyl/D-aspartyl protein methyltransferase family.</text>
</comment>
<gene>
    <name evidence="1" type="primary">pcm</name>
    <name type="ordered locus">Pars_2349</name>
</gene>